<comment type="function">
    <text evidence="1">Catalyzes the oxidation of 5,10-methylenetetrahydrofolate to 5,10-methenyltetrahydrofolate and then the hydrolysis of 5,10-methenyltetrahydrofolate to 10-formyltetrahydrofolate.</text>
</comment>
<comment type="catalytic activity">
    <reaction evidence="1">
        <text>(6R)-5,10-methylene-5,6,7,8-tetrahydrofolate + NADP(+) = (6R)-5,10-methenyltetrahydrofolate + NADPH</text>
        <dbReference type="Rhea" id="RHEA:22812"/>
        <dbReference type="ChEBI" id="CHEBI:15636"/>
        <dbReference type="ChEBI" id="CHEBI:57455"/>
        <dbReference type="ChEBI" id="CHEBI:57783"/>
        <dbReference type="ChEBI" id="CHEBI:58349"/>
        <dbReference type="EC" id="1.5.1.5"/>
    </reaction>
</comment>
<comment type="catalytic activity">
    <reaction evidence="1">
        <text>(6R)-5,10-methenyltetrahydrofolate + H2O = (6R)-10-formyltetrahydrofolate + H(+)</text>
        <dbReference type="Rhea" id="RHEA:23700"/>
        <dbReference type="ChEBI" id="CHEBI:15377"/>
        <dbReference type="ChEBI" id="CHEBI:15378"/>
        <dbReference type="ChEBI" id="CHEBI:57455"/>
        <dbReference type="ChEBI" id="CHEBI:195366"/>
        <dbReference type="EC" id="3.5.4.9"/>
    </reaction>
</comment>
<comment type="pathway">
    <text evidence="1">One-carbon metabolism; tetrahydrofolate interconversion.</text>
</comment>
<comment type="subunit">
    <text evidence="1">Homodimer.</text>
</comment>
<comment type="similarity">
    <text evidence="1">Belongs to the tetrahydrofolate dehydrogenase/cyclohydrolase family.</text>
</comment>
<accession>B0SRN4</accession>
<dbReference type="EC" id="1.5.1.5" evidence="1"/>
<dbReference type="EC" id="3.5.4.9" evidence="1"/>
<dbReference type="EMBL" id="CP000786">
    <property type="protein sequence ID" value="ABZ97829.1"/>
    <property type="molecule type" value="Genomic_DNA"/>
</dbReference>
<dbReference type="RefSeq" id="WP_012388707.1">
    <property type="nucleotide sequence ID" value="NC_010602.1"/>
</dbReference>
<dbReference type="SMR" id="B0SRN4"/>
<dbReference type="STRING" id="456481.LEPBI_I1723"/>
<dbReference type="KEGG" id="lbi:LEPBI_I1723"/>
<dbReference type="HOGENOM" id="CLU_034045_2_1_12"/>
<dbReference type="OrthoDB" id="9803580at2"/>
<dbReference type="BioCyc" id="LBIF456481:LEPBI_RS08510-MONOMER"/>
<dbReference type="UniPathway" id="UPA00193"/>
<dbReference type="Proteomes" id="UP000001847">
    <property type="component" value="Chromosome I"/>
</dbReference>
<dbReference type="GO" id="GO:0005829">
    <property type="term" value="C:cytosol"/>
    <property type="evidence" value="ECO:0007669"/>
    <property type="project" value="TreeGrafter"/>
</dbReference>
<dbReference type="GO" id="GO:0004477">
    <property type="term" value="F:methenyltetrahydrofolate cyclohydrolase activity"/>
    <property type="evidence" value="ECO:0007669"/>
    <property type="project" value="UniProtKB-UniRule"/>
</dbReference>
<dbReference type="GO" id="GO:0004488">
    <property type="term" value="F:methylenetetrahydrofolate dehydrogenase (NADP+) activity"/>
    <property type="evidence" value="ECO:0007669"/>
    <property type="project" value="UniProtKB-UniRule"/>
</dbReference>
<dbReference type="GO" id="GO:0000105">
    <property type="term" value="P:L-histidine biosynthetic process"/>
    <property type="evidence" value="ECO:0007669"/>
    <property type="project" value="UniProtKB-KW"/>
</dbReference>
<dbReference type="GO" id="GO:0009086">
    <property type="term" value="P:methionine biosynthetic process"/>
    <property type="evidence" value="ECO:0007669"/>
    <property type="project" value="UniProtKB-KW"/>
</dbReference>
<dbReference type="GO" id="GO:0006164">
    <property type="term" value="P:purine nucleotide biosynthetic process"/>
    <property type="evidence" value="ECO:0007669"/>
    <property type="project" value="UniProtKB-KW"/>
</dbReference>
<dbReference type="GO" id="GO:0035999">
    <property type="term" value="P:tetrahydrofolate interconversion"/>
    <property type="evidence" value="ECO:0007669"/>
    <property type="project" value="UniProtKB-UniRule"/>
</dbReference>
<dbReference type="CDD" id="cd01080">
    <property type="entry name" value="NAD_bind_m-THF_DH_Cyclohyd"/>
    <property type="match status" value="1"/>
</dbReference>
<dbReference type="FunFam" id="3.40.50.720:FF:000094">
    <property type="entry name" value="Bifunctional protein FolD"/>
    <property type="match status" value="1"/>
</dbReference>
<dbReference type="FunFam" id="3.40.50.10860:FF:000005">
    <property type="entry name" value="C-1-tetrahydrofolate synthase, cytoplasmic, putative"/>
    <property type="match status" value="1"/>
</dbReference>
<dbReference type="Gene3D" id="3.40.50.10860">
    <property type="entry name" value="Leucine Dehydrogenase, chain A, domain 1"/>
    <property type="match status" value="1"/>
</dbReference>
<dbReference type="Gene3D" id="3.40.50.720">
    <property type="entry name" value="NAD(P)-binding Rossmann-like Domain"/>
    <property type="match status" value="1"/>
</dbReference>
<dbReference type="HAMAP" id="MF_01576">
    <property type="entry name" value="THF_DHG_CYH"/>
    <property type="match status" value="1"/>
</dbReference>
<dbReference type="InterPro" id="IPR046346">
    <property type="entry name" value="Aminoacid_DH-like_N_sf"/>
</dbReference>
<dbReference type="InterPro" id="IPR036291">
    <property type="entry name" value="NAD(P)-bd_dom_sf"/>
</dbReference>
<dbReference type="InterPro" id="IPR000672">
    <property type="entry name" value="THF_DH/CycHdrlase"/>
</dbReference>
<dbReference type="InterPro" id="IPR020630">
    <property type="entry name" value="THF_DH/CycHdrlase_cat_dom"/>
</dbReference>
<dbReference type="InterPro" id="IPR020867">
    <property type="entry name" value="THF_DH/CycHdrlase_CS"/>
</dbReference>
<dbReference type="InterPro" id="IPR020631">
    <property type="entry name" value="THF_DH/CycHdrlase_NAD-bd_dom"/>
</dbReference>
<dbReference type="NCBIfam" id="NF010774">
    <property type="entry name" value="PRK14177.1"/>
    <property type="match status" value="1"/>
</dbReference>
<dbReference type="PANTHER" id="PTHR48099:SF5">
    <property type="entry name" value="C-1-TETRAHYDROFOLATE SYNTHASE, CYTOPLASMIC"/>
    <property type="match status" value="1"/>
</dbReference>
<dbReference type="PANTHER" id="PTHR48099">
    <property type="entry name" value="C-1-TETRAHYDROFOLATE SYNTHASE, CYTOPLASMIC-RELATED"/>
    <property type="match status" value="1"/>
</dbReference>
<dbReference type="Pfam" id="PF00763">
    <property type="entry name" value="THF_DHG_CYH"/>
    <property type="match status" value="1"/>
</dbReference>
<dbReference type="Pfam" id="PF02882">
    <property type="entry name" value="THF_DHG_CYH_C"/>
    <property type="match status" value="1"/>
</dbReference>
<dbReference type="PRINTS" id="PR00085">
    <property type="entry name" value="THFDHDRGNASE"/>
</dbReference>
<dbReference type="SUPFAM" id="SSF53223">
    <property type="entry name" value="Aminoacid dehydrogenase-like, N-terminal domain"/>
    <property type="match status" value="1"/>
</dbReference>
<dbReference type="SUPFAM" id="SSF51735">
    <property type="entry name" value="NAD(P)-binding Rossmann-fold domains"/>
    <property type="match status" value="1"/>
</dbReference>
<dbReference type="PROSITE" id="PS00767">
    <property type="entry name" value="THF_DHG_CYH_2"/>
    <property type="match status" value="1"/>
</dbReference>
<reference key="1">
    <citation type="journal article" date="2008" name="PLoS ONE">
        <title>Genome sequence of the saprophyte Leptospira biflexa provides insights into the evolution of Leptospira and the pathogenesis of leptospirosis.</title>
        <authorList>
            <person name="Picardeau M."/>
            <person name="Bulach D.M."/>
            <person name="Bouchier C."/>
            <person name="Zuerner R.L."/>
            <person name="Zidane N."/>
            <person name="Wilson P.J."/>
            <person name="Creno S."/>
            <person name="Kuczek E.S."/>
            <person name="Bommezzadri S."/>
            <person name="Davis J.C."/>
            <person name="McGrath A."/>
            <person name="Johnson M.J."/>
            <person name="Boursaux-Eude C."/>
            <person name="Seemann T."/>
            <person name="Rouy Z."/>
            <person name="Coppel R.L."/>
            <person name="Rood J.I."/>
            <person name="Lajus A."/>
            <person name="Davies J.K."/>
            <person name="Medigue C."/>
            <person name="Adler B."/>
        </authorList>
    </citation>
    <scope>NUCLEOTIDE SEQUENCE [LARGE SCALE GENOMIC DNA]</scope>
    <source>
        <strain>Patoc 1 / ATCC 23582 / Paris</strain>
    </source>
</reference>
<proteinExistence type="inferred from homology"/>
<sequence length="291" mass="31729">MKSSILLDGKAISEKIRNRIQETLAKAKAEGKGIPTLATILVGNNPASETYVNMKVKACEKVGMHSRYIRLKEETTTEELLGEIRKLNLDPSINGILLQHPVPHQIDERKAFDEIALEKDVDGVTTISFGKLSMNSEAYYPCTPYGMVLLLQEYGIDVTGKHAVVVGRSPILGKPMAIMLTNLNATVTLCHSKTEDLPSLVKQADIIVGAVGKPEFIKAEWMKEGVVILDAGYNVGNVGDIEVSKAKDKSSYYTPVPGGVGPMTISVLLLQTMYSFLGQFSPKLESHVANR</sequence>
<name>FOLD_LEPBP</name>
<protein>
    <recommendedName>
        <fullName evidence="1">Bifunctional protein FolD</fullName>
    </recommendedName>
    <domain>
        <recommendedName>
            <fullName evidence="1">Methylenetetrahydrofolate dehydrogenase</fullName>
            <ecNumber evidence="1">1.5.1.5</ecNumber>
        </recommendedName>
    </domain>
    <domain>
        <recommendedName>
            <fullName evidence="1">Methenyltetrahydrofolate cyclohydrolase</fullName>
            <ecNumber evidence="1">3.5.4.9</ecNumber>
        </recommendedName>
    </domain>
</protein>
<keyword id="KW-0028">Amino-acid biosynthesis</keyword>
<keyword id="KW-0368">Histidine biosynthesis</keyword>
<keyword id="KW-0378">Hydrolase</keyword>
<keyword id="KW-0486">Methionine biosynthesis</keyword>
<keyword id="KW-0511">Multifunctional enzyme</keyword>
<keyword id="KW-0521">NADP</keyword>
<keyword id="KW-0554">One-carbon metabolism</keyword>
<keyword id="KW-0560">Oxidoreductase</keyword>
<keyword id="KW-0658">Purine biosynthesis</keyword>
<keyword id="KW-1185">Reference proteome</keyword>
<evidence type="ECO:0000255" key="1">
    <source>
        <dbReference type="HAMAP-Rule" id="MF_01576"/>
    </source>
</evidence>
<organism>
    <name type="scientific">Leptospira biflexa serovar Patoc (strain Patoc 1 / ATCC 23582 / Paris)</name>
    <dbReference type="NCBI Taxonomy" id="456481"/>
    <lineage>
        <taxon>Bacteria</taxon>
        <taxon>Pseudomonadati</taxon>
        <taxon>Spirochaetota</taxon>
        <taxon>Spirochaetia</taxon>
        <taxon>Leptospirales</taxon>
        <taxon>Leptospiraceae</taxon>
        <taxon>Leptospira</taxon>
    </lineage>
</organism>
<gene>
    <name evidence="1" type="primary">folD</name>
    <name type="ordered locus">LEPBI_I1723</name>
</gene>
<feature type="chain" id="PRO_1000196789" description="Bifunctional protein FolD">
    <location>
        <begin position="1"/>
        <end position="291"/>
    </location>
</feature>
<feature type="binding site" evidence="1">
    <location>
        <begin position="167"/>
        <end position="169"/>
    </location>
    <ligand>
        <name>NADP(+)</name>
        <dbReference type="ChEBI" id="CHEBI:58349"/>
    </ligand>
</feature>
<feature type="binding site" evidence="1">
    <location>
        <position position="192"/>
    </location>
    <ligand>
        <name>NADP(+)</name>
        <dbReference type="ChEBI" id="CHEBI:58349"/>
    </ligand>
</feature>